<keyword id="KW-0067">ATP-binding</keyword>
<keyword id="KW-0227">DNA damage</keyword>
<keyword id="KW-0234">DNA repair</keyword>
<keyword id="KW-0238">DNA-binding</keyword>
<keyword id="KW-0460">Magnesium</keyword>
<keyword id="KW-0547">Nucleotide-binding</keyword>
<keyword id="KW-0548">Nucleotidyltransferase</keyword>
<keyword id="KW-1185">Reference proteome</keyword>
<keyword id="KW-0808">Transferase</keyword>
<feature type="chain" id="PRO_1000017374" description="DNA integrity scanning protein DisA">
    <location>
        <begin position="1"/>
        <end position="358"/>
    </location>
</feature>
<feature type="domain" description="DAC" evidence="2">
    <location>
        <begin position="6"/>
        <end position="144"/>
    </location>
</feature>
<feature type="binding site" evidence="1">
    <location>
        <position position="73"/>
    </location>
    <ligand>
        <name>ATP</name>
        <dbReference type="ChEBI" id="CHEBI:30616"/>
    </ligand>
</feature>
<feature type="binding site" evidence="1">
    <location>
        <position position="91"/>
    </location>
    <ligand>
        <name>ATP</name>
        <dbReference type="ChEBI" id="CHEBI:30616"/>
    </ligand>
</feature>
<feature type="binding site" evidence="1">
    <location>
        <begin position="104"/>
        <end position="108"/>
    </location>
    <ligand>
        <name>ATP</name>
        <dbReference type="ChEBI" id="CHEBI:30616"/>
    </ligand>
</feature>
<accession>A5U8R1</accession>
<evidence type="ECO:0000255" key="1">
    <source>
        <dbReference type="HAMAP-Rule" id="MF_01438"/>
    </source>
</evidence>
<evidence type="ECO:0000255" key="2">
    <source>
        <dbReference type="PROSITE-ProRule" id="PRU01130"/>
    </source>
</evidence>
<organism>
    <name type="scientific">Mycobacterium tuberculosis (strain ATCC 25177 / H37Ra)</name>
    <dbReference type="NCBI Taxonomy" id="419947"/>
    <lineage>
        <taxon>Bacteria</taxon>
        <taxon>Bacillati</taxon>
        <taxon>Actinomycetota</taxon>
        <taxon>Actinomycetes</taxon>
        <taxon>Mycobacteriales</taxon>
        <taxon>Mycobacteriaceae</taxon>
        <taxon>Mycobacterium</taxon>
        <taxon>Mycobacterium tuberculosis complex</taxon>
    </lineage>
</organism>
<sequence length="358" mass="39031">MHAVTRPTLREAVARLAPGTGLRDGLERILRGRTGALIVLGHDENVEAICDGGFSLDVRYAATRLRELCKMDGAVVLSTDGSRIVRANVQLVPDPSIPTDESGTRHRSAERAAIQTGYPVISVSHSMNIVTVYVRGERHVLTDSATILSRANQAIATLERYKTRLDEVSRQLSRAEIEDFVTLRDVMTVVQRLELVRRIGLVIDYDVVELGTDGRQLRLQLDELLGGNDTARELIVRDYHANPEPPSTGQINATLDELDALSDGDLLDFTALAKVFGYPTTTEAQDSTLSPRGYRAMAGIPRLQFAHADLLVRAFGTLQGLLAASAGDLQSVDGIGAMWARHVREGLSQLAESTISDQ</sequence>
<dbReference type="EC" id="2.7.7.85" evidence="1"/>
<dbReference type="EMBL" id="CP000611">
    <property type="protein sequence ID" value="ABQ75411.1"/>
    <property type="molecule type" value="Genomic_DNA"/>
</dbReference>
<dbReference type="RefSeq" id="WP_003900111.1">
    <property type="nucleotide sequence ID" value="NZ_CP016972.1"/>
</dbReference>
<dbReference type="SMR" id="A5U8R1"/>
<dbReference type="KEGG" id="mra:MRA_3625"/>
<dbReference type="eggNOG" id="COG1623">
    <property type="taxonomic scope" value="Bacteria"/>
</dbReference>
<dbReference type="HOGENOM" id="CLU_787128_0_0_11"/>
<dbReference type="Proteomes" id="UP000001988">
    <property type="component" value="Chromosome"/>
</dbReference>
<dbReference type="GO" id="GO:0004016">
    <property type="term" value="F:adenylate cyclase activity"/>
    <property type="evidence" value="ECO:0007669"/>
    <property type="project" value="TreeGrafter"/>
</dbReference>
<dbReference type="GO" id="GO:0005524">
    <property type="term" value="F:ATP binding"/>
    <property type="evidence" value="ECO:0007669"/>
    <property type="project" value="UniProtKB-UniRule"/>
</dbReference>
<dbReference type="GO" id="GO:0106408">
    <property type="term" value="F:diadenylate cyclase activity"/>
    <property type="evidence" value="ECO:0007669"/>
    <property type="project" value="UniProtKB-EC"/>
</dbReference>
<dbReference type="GO" id="GO:0003677">
    <property type="term" value="F:DNA binding"/>
    <property type="evidence" value="ECO:0007669"/>
    <property type="project" value="UniProtKB-UniRule"/>
</dbReference>
<dbReference type="GO" id="GO:0006281">
    <property type="term" value="P:DNA repair"/>
    <property type="evidence" value="ECO:0007669"/>
    <property type="project" value="UniProtKB-UniRule"/>
</dbReference>
<dbReference type="FunFam" id="1.10.150.20:FF:000016">
    <property type="entry name" value="DNA integrity scanning protein DisA"/>
    <property type="match status" value="1"/>
</dbReference>
<dbReference type="FunFam" id="1.20.1260.110:FF:000002">
    <property type="entry name" value="DNA integrity scanning protein DisA"/>
    <property type="match status" value="1"/>
</dbReference>
<dbReference type="FunFam" id="3.40.1700.10:FF:000001">
    <property type="entry name" value="DNA integrity scanning protein DisA"/>
    <property type="match status" value="1"/>
</dbReference>
<dbReference type="Gene3D" id="1.10.150.20">
    <property type="entry name" value="5' to 3' exonuclease, C-terminal subdomain"/>
    <property type="match status" value="1"/>
</dbReference>
<dbReference type="Gene3D" id="1.20.1260.110">
    <property type="entry name" value="DNA integrity scanning linker region"/>
    <property type="match status" value="1"/>
</dbReference>
<dbReference type="Gene3D" id="3.40.1700.10">
    <property type="entry name" value="DNA integrity scanning protein, DisA, N-terminal domain"/>
    <property type="match status" value="1"/>
</dbReference>
<dbReference type="HAMAP" id="MF_01438">
    <property type="entry name" value="DisA"/>
    <property type="match status" value="1"/>
</dbReference>
<dbReference type="InterPro" id="IPR050338">
    <property type="entry name" value="DisA"/>
</dbReference>
<dbReference type="InterPro" id="IPR038331">
    <property type="entry name" value="DisA_sf"/>
</dbReference>
<dbReference type="InterPro" id="IPR036888">
    <property type="entry name" value="DNA_integrity_DisA_N_sf"/>
</dbReference>
<dbReference type="InterPro" id="IPR018906">
    <property type="entry name" value="DNA_integrity_scan_DisA_link"/>
</dbReference>
<dbReference type="InterPro" id="IPR003390">
    <property type="entry name" value="DNA_integrity_scan_DisA_N"/>
</dbReference>
<dbReference type="InterPro" id="IPR023763">
    <property type="entry name" value="DNA_integrity_scanning_protein"/>
</dbReference>
<dbReference type="InterPro" id="IPR010994">
    <property type="entry name" value="RuvA_2-like"/>
</dbReference>
<dbReference type="NCBIfam" id="NF010009">
    <property type="entry name" value="PRK13482.1"/>
    <property type="match status" value="1"/>
</dbReference>
<dbReference type="PANTHER" id="PTHR34185">
    <property type="entry name" value="DIADENYLATE CYCLASE"/>
    <property type="match status" value="1"/>
</dbReference>
<dbReference type="PANTHER" id="PTHR34185:SF3">
    <property type="entry name" value="DNA INTEGRITY SCANNING PROTEIN DISA"/>
    <property type="match status" value="1"/>
</dbReference>
<dbReference type="Pfam" id="PF02457">
    <property type="entry name" value="DAC"/>
    <property type="match status" value="1"/>
</dbReference>
<dbReference type="Pfam" id="PF10635">
    <property type="entry name" value="DisA-linker"/>
    <property type="match status" value="1"/>
</dbReference>
<dbReference type="SUPFAM" id="SSF47781">
    <property type="entry name" value="RuvA domain 2-like"/>
    <property type="match status" value="1"/>
</dbReference>
<dbReference type="SUPFAM" id="SSF143597">
    <property type="entry name" value="YojJ-like"/>
    <property type="match status" value="1"/>
</dbReference>
<dbReference type="PROSITE" id="PS51794">
    <property type="entry name" value="DAC"/>
    <property type="match status" value="1"/>
</dbReference>
<proteinExistence type="inferred from homology"/>
<reference key="1">
    <citation type="journal article" date="2008" name="PLoS ONE">
        <title>Genetic basis of virulence attenuation revealed by comparative genomic analysis of Mycobacterium tuberculosis strain H37Ra versus H37Rv.</title>
        <authorList>
            <person name="Zheng H."/>
            <person name="Lu L."/>
            <person name="Wang B."/>
            <person name="Pu S."/>
            <person name="Zhang X."/>
            <person name="Zhu G."/>
            <person name="Shi W."/>
            <person name="Zhang L."/>
            <person name="Wang H."/>
            <person name="Wang S."/>
            <person name="Zhao G."/>
            <person name="Zhang Y."/>
        </authorList>
    </citation>
    <scope>NUCLEOTIDE SEQUENCE [LARGE SCALE GENOMIC DNA]</scope>
    <source>
        <strain>ATCC 25177 / H37Ra</strain>
    </source>
</reference>
<name>DISA_MYCTA</name>
<protein>
    <recommendedName>
        <fullName evidence="1">DNA integrity scanning protein DisA</fullName>
    </recommendedName>
    <alternativeName>
        <fullName evidence="1">Cyclic di-AMP synthase</fullName>
        <shortName evidence="1">c-di-AMP synthase</shortName>
    </alternativeName>
    <alternativeName>
        <fullName evidence="1">Diadenylate cyclase</fullName>
        <ecNumber evidence="1">2.7.7.85</ecNumber>
    </alternativeName>
</protein>
<comment type="function">
    <text evidence="1">Participates in a DNA-damage check-point. DisA forms globular foci that rapidly scan along the chromosomes searching for lesions.</text>
</comment>
<comment type="function">
    <text evidence="1">Also has diadenylate cyclase activity, catalyzing the condensation of 2 ATP molecules into cyclic di-AMP (c-di-AMP). c-di-AMP likely acts as a signaling molecule that may couple DNA integrity with a cellular process.</text>
</comment>
<comment type="catalytic activity">
    <reaction evidence="1">
        <text>2 ATP = 3',3'-c-di-AMP + 2 diphosphate</text>
        <dbReference type="Rhea" id="RHEA:35655"/>
        <dbReference type="ChEBI" id="CHEBI:30616"/>
        <dbReference type="ChEBI" id="CHEBI:33019"/>
        <dbReference type="ChEBI" id="CHEBI:71500"/>
        <dbReference type="EC" id="2.7.7.85"/>
    </reaction>
</comment>
<comment type="cofactor">
    <cofactor evidence="1">
        <name>Mg(2+)</name>
        <dbReference type="ChEBI" id="CHEBI:18420"/>
    </cofactor>
</comment>
<comment type="subunit">
    <text evidence="1">Homooctamer.</text>
</comment>
<comment type="similarity">
    <text evidence="1">Belongs to the DisA family.</text>
</comment>
<gene>
    <name evidence="1" type="primary">disA</name>
    <name type="ordered locus">MRA_3625</name>
</gene>